<feature type="chain" id="PRO_0000318032" description="Autophagy-related protein 22">
    <location>
        <begin position="1"/>
        <end position="559"/>
    </location>
</feature>
<feature type="transmembrane region" description="Helical" evidence="2">
    <location>
        <begin position="32"/>
        <end position="52"/>
    </location>
</feature>
<feature type="transmembrane region" description="Helical" evidence="2">
    <location>
        <begin position="126"/>
        <end position="146"/>
    </location>
</feature>
<feature type="transmembrane region" description="Helical" evidence="2">
    <location>
        <begin position="156"/>
        <end position="176"/>
    </location>
</feature>
<feature type="transmembrane region" description="Helical" evidence="2">
    <location>
        <begin position="181"/>
        <end position="201"/>
    </location>
</feature>
<feature type="transmembrane region" description="Helical" evidence="2">
    <location>
        <begin position="239"/>
        <end position="259"/>
    </location>
</feature>
<feature type="transmembrane region" description="Helical" evidence="2">
    <location>
        <begin position="277"/>
        <end position="297"/>
    </location>
</feature>
<feature type="transmembrane region" description="Helical" evidence="2">
    <location>
        <begin position="358"/>
        <end position="378"/>
    </location>
</feature>
<feature type="transmembrane region" description="Helical" evidence="2">
    <location>
        <begin position="393"/>
        <end position="413"/>
    </location>
</feature>
<feature type="transmembrane region" description="Helical" evidence="2">
    <location>
        <begin position="425"/>
        <end position="445"/>
    </location>
</feature>
<feature type="transmembrane region" description="Helical" evidence="2">
    <location>
        <begin position="453"/>
        <end position="473"/>
    </location>
</feature>
<feature type="transmembrane region" description="Helical" evidence="2">
    <location>
        <begin position="493"/>
        <end position="513"/>
    </location>
</feature>
<feature type="transmembrane region" description="Helical" evidence="2">
    <location>
        <begin position="523"/>
        <end position="543"/>
    </location>
</feature>
<feature type="glycosylation site" description="N-linked (GlcNAc...) asparagine" evidence="2">
    <location>
        <position position="97"/>
    </location>
</feature>
<feature type="glycosylation site" description="N-linked (GlcNAc...) asparagine" evidence="2">
    <location>
        <position position="106"/>
    </location>
</feature>
<dbReference type="EMBL" id="EF107726">
    <property type="protein sequence ID" value="ABO31064.1"/>
    <property type="molecule type" value="Genomic_DNA"/>
</dbReference>
<dbReference type="GlyCosmos" id="A7KAK4">
    <property type="glycosylation" value="2 sites, No reported glycans"/>
</dbReference>
<dbReference type="PhylomeDB" id="A7KAK4"/>
<dbReference type="GO" id="GO:0005774">
    <property type="term" value="C:vacuolar membrane"/>
    <property type="evidence" value="ECO:0007669"/>
    <property type="project" value="UniProtKB-SubCell"/>
</dbReference>
<dbReference type="GO" id="GO:0032974">
    <property type="term" value="P:amino acid transmembrane export from vacuole"/>
    <property type="evidence" value="ECO:0007669"/>
    <property type="project" value="InterPro"/>
</dbReference>
<dbReference type="GO" id="GO:0006914">
    <property type="term" value="P:autophagy"/>
    <property type="evidence" value="ECO:0007669"/>
    <property type="project" value="UniProtKB-KW"/>
</dbReference>
<dbReference type="CDD" id="cd17483">
    <property type="entry name" value="MFS_Atg22_like"/>
    <property type="match status" value="1"/>
</dbReference>
<dbReference type="Gene3D" id="1.20.1250.20">
    <property type="entry name" value="MFS general substrate transporter like domains"/>
    <property type="match status" value="1"/>
</dbReference>
<dbReference type="InterPro" id="IPR044738">
    <property type="entry name" value="Atg22"/>
</dbReference>
<dbReference type="InterPro" id="IPR024671">
    <property type="entry name" value="Atg22-like"/>
</dbReference>
<dbReference type="InterPro" id="IPR050495">
    <property type="entry name" value="ATG22/LtaA_families"/>
</dbReference>
<dbReference type="InterPro" id="IPR036259">
    <property type="entry name" value="MFS_trans_sf"/>
</dbReference>
<dbReference type="PANTHER" id="PTHR23519">
    <property type="entry name" value="AUTOPHAGY-RELATED PROTEIN 22"/>
    <property type="match status" value="1"/>
</dbReference>
<dbReference type="PANTHER" id="PTHR23519:SF1">
    <property type="entry name" value="AUTOPHAGY-RELATED PROTEIN 22"/>
    <property type="match status" value="1"/>
</dbReference>
<dbReference type="Pfam" id="PF11700">
    <property type="entry name" value="ATG22"/>
    <property type="match status" value="1"/>
</dbReference>
<dbReference type="SUPFAM" id="SSF103473">
    <property type="entry name" value="MFS general substrate transporter"/>
    <property type="match status" value="1"/>
</dbReference>
<protein>
    <recommendedName>
        <fullName>Autophagy-related protein 22</fullName>
    </recommendedName>
</protein>
<name>ATG22_PICAN</name>
<reference key="1">
    <citation type="journal article" date="2007" name="Autophagy">
        <title>ATG genes involved in non-selective autophagy are conserved from yeast to man, but the selective Cvt and pexophagy pathways also require organism-specific genes.</title>
        <authorList>
            <person name="Meijer W.H."/>
            <person name="van der Klei I.J."/>
            <person name="Veenhuis M."/>
            <person name="Kiel J.A.K.W."/>
        </authorList>
    </citation>
    <scope>NUCLEOTIDE SEQUENCE [GENOMIC DNA]</scope>
    <scope>FUNCTION</scope>
    <source>
        <strain>ATCC 34438 / CBS 4732 / DSM 70277 / JCM 3621 / NBRC 1476 / NRRL Y-5445</strain>
    </source>
</reference>
<sequence>MTEPLLDSSSDDEPSLVLPENINQPFTTGAEVFGWCLYSWAAEPFIVSVVGTYVPLLLEQIARDNGVKLIDKITPCNQPHDPTIPIPSPPKDGDFPNSTLTYASQNDSCVLPMFGGRFYIDTSSYALYTFSMSVLIQTILVISMSGAADRGSHRKSMLVGFGVTGGLITMCYWLVDDRNYYMASMLAILANSAFGGVNVCGNSFLSLLVNNHPSVRQIHLSKSLKLARMGEISSKISGICAASGYISALLMQIITMLVILHVRNNPNIDSLIYPLKLVIGLVGLWWFVFQLPIQFLLKPRLSKELHVSIEPPDPSKPGYSVNIVRYKMLVVGAYILHGYKTLFSAARAASQLKDIMAFLLGWFIISDSLTTINSTAILFAKSDLQMTTVQLSQIGVLTMISAIAGSVLLPNVIQPYFKLGLKQTMILIIVWASLIPLYGILGFFIRSLGLHHAVEMYVLAIWYGFSLGGVATISRSLYSMLIPPGQESVFFALFSITDKGSSIVGPFLVGLIIDKTHDIRKCFWLLFVFLIAAVPVFWYGIDVDRGINEATVLEHEQDG</sequence>
<comment type="function">
    <text evidence="1 3">Vacuolar effluxer which mediate the efflux of amino acids resulting from autophagic degradation. The release of autophagic amino acids allows the maintenance of protein synthesis and viability during nitrogen starvation (By similarity).</text>
</comment>
<comment type="subcellular location">
    <subcellularLocation>
        <location evidence="1">Vacuole membrane</location>
        <topology evidence="1">Multi-pass membrane protein</topology>
    </subcellularLocation>
    <text evidence="1">Vacuole and punctate structures.</text>
</comment>
<comment type="similarity">
    <text evidence="4">Belongs to the ATG22 family.</text>
</comment>
<evidence type="ECO:0000250" key="1"/>
<evidence type="ECO:0000255" key="2"/>
<evidence type="ECO:0000269" key="3">
    <source>
    </source>
</evidence>
<evidence type="ECO:0000305" key="4"/>
<gene>
    <name type="primary">ATG22</name>
</gene>
<accession>A7KAK4</accession>
<proteinExistence type="inferred from homology"/>
<organism>
    <name type="scientific">Pichia angusta</name>
    <name type="common">Yeast</name>
    <name type="synonym">Hansenula polymorpha</name>
    <dbReference type="NCBI Taxonomy" id="870730"/>
    <lineage>
        <taxon>Eukaryota</taxon>
        <taxon>Fungi</taxon>
        <taxon>Dikarya</taxon>
        <taxon>Ascomycota</taxon>
        <taxon>Saccharomycotina</taxon>
        <taxon>Pichiomycetes</taxon>
        <taxon>Pichiales</taxon>
        <taxon>Pichiaceae</taxon>
        <taxon>Ogataea</taxon>
    </lineage>
</organism>
<keyword id="KW-0029">Amino-acid transport</keyword>
<keyword id="KW-0072">Autophagy</keyword>
<keyword id="KW-0325">Glycoprotein</keyword>
<keyword id="KW-0472">Membrane</keyword>
<keyword id="KW-0812">Transmembrane</keyword>
<keyword id="KW-1133">Transmembrane helix</keyword>
<keyword id="KW-0813">Transport</keyword>
<keyword id="KW-0926">Vacuole</keyword>